<dbReference type="EMBL" id="CP000901">
    <property type="protein sequence ID" value="ABX86503.1"/>
    <property type="molecule type" value="Genomic_DNA"/>
</dbReference>
<dbReference type="KEGG" id="ypg:YpAngola_A1824"/>
<dbReference type="PATRIC" id="fig|349746.12.peg.2800"/>
<dbReference type="GO" id="GO:0005886">
    <property type="term" value="C:plasma membrane"/>
    <property type="evidence" value="ECO:0007669"/>
    <property type="project" value="UniProtKB-SubCell"/>
</dbReference>
<dbReference type="HAMAP" id="MF_01101">
    <property type="entry name" value="UPF0208"/>
    <property type="match status" value="1"/>
</dbReference>
<dbReference type="InterPro" id="IPR007334">
    <property type="entry name" value="UPF0208"/>
</dbReference>
<dbReference type="NCBIfam" id="NF002493">
    <property type="entry name" value="PRK01816.1"/>
    <property type="match status" value="1"/>
</dbReference>
<dbReference type="Pfam" id="PF04217">
    <property type="entry name" value="DUF412"/>
    <property type="match status" value="1"/>
</dbReference>
<feature type="chain" id="PRO_1000137006" description="UPF0208 membrane protein YpAngola_A1824">
    <location>
        <begin position="1"/>
        <end position="151"/>
    </location>
</feature>
<feature type="transmembrane region" description="Helical" evidence="1">
    <location>
        <begin position="46"/>
        <end position="66"/>
    </location>
</feature>
<feature type="transmembrane region" description="Helical" evidence="1">
    <location>
        <begin position="69"/>
        <end position="89"/>
    </location>
</feature>
<organism>
    <name type="scientific">Yersinia pestis bv. Antiqua (strain Angola)</name>
    <dbReference type="NCBI Taxonomy" id="349746"/>
    <lineage>
        <taxon>Bacteria</taxon>
        <taxon>Pseudomonadati</taxon>
        <taxon>Pseudomonadota</taxon>
        <taxon>Gammaproteobacteria</taxon>
        <taxon>Enterobacterales</taxon>
        <taxon>Yersiniaceae</taxon>
        <taxon>Yersinia</taxon>
    </lineage>
</organism>
<accession>A9R6M8</accession>
<sequence length="151" mass="17122">MTIKPSDSVSWFQVLQRGQHYMKTWPADKRLAPVFPENRVTVVTRFGIRFMPPLAIFTLTWQIALGGQLGPAIATALFACGLPLQGLWWLGKRAITPLPPTLLQWFHEVRHKLFEAGQAVAPIEPIPTYQSLADLLKRAFKQLDKTFLDDL</sequence>
<protein>
    <recommendedName>
        <fullName evidence="1">UPF0208 membrane protein YpAngola_A1824</fullName>
    </recommendedName>
</protein>
<reference key="1">
    <citation type="journal article" date="2010" name="J. Bacteriol.">
        <title>Genome sequence of the deep-rooted Yersinia pestis strain Angola reveals new insights into the evolution and pangenome of the plague bacterium.</title>
        <authorList>
            <person name="Eppinger M."/>
            <person name="Worsham P.L."/>
            <person name="Nikolich M.P."/>
            <person name="Riley D.R."/>
            <person name="Sebastian Y."/>
            <person name="Mou S."/>
            <person name="Achtman M."/>
            <person name="Lindler L.E."/>
            <person name="Ravel J."/>
        </authorList>
    </citation>
    <scope>NUCLEOTIDE SEQUENCE [LARGE SCALE GENOMIC DNA]</scope>
    <source>
        <strain>Angola</strain>
    </source>
</reference>
<comment type="subcellular location">
    <subcellularLocation>
        <location evidence="1">Cell inner membrane</location>
        <topology evidence="1">Multi-pass membrane protein</topology>
    </subcellularLocation>
</comment>
<comment type="similarity">
    <text evidence="1">Belongs to the UPF0208 family.</text>
</comment>
<name>Y1824_YERPG</name>
<keyword id="KW-0997">Cell inner membrane</keyword>
<keyword id="KW-1003">Cell membrane</keyword>
<keyword id="KW-0472">Membrane</keyword>
<keyword id="KW-0812">Transmembrane</keyword>
<keyword id="KW-1133">Transmembrane helix</keyword>
<evidence type="ECO:0000255" key="1">
    <source>
        <dbReference type="HAMAP-Rule" id="MF_01101"/>
    </source>
</evidence>
<proteinExistence type="inferred from homology"/>
<gene>
    <name type="ordered locus">YpAngola_A1824</name>
</gene>